<sequence>MNPFVSVIIYTTIILGTMIVMTSSHWLLTWTGFEMNMLAIIPIMMKSPNPRATEASVKYFMTQATASMLLMLAVIINLLYSGQWTVMKMLNPTASMIMTMALAMKLGLSPFHFWVPEVTQGVPLTAGLILLTWQKLAPLSILYQISPSINPNLILTMSMLSILVGGWGGLNQTQLRKIMAYSSIAHMGWMAAILIYNPTMTILNLTIYLMTTFTMFTMFALNSTTTTLSLSHTWNKTPIITTLMLTILLSMGGLPPLTGFVPKWMIIQEMTKNDSIILPTLMAIMALLNLYFYMRLTYSTTLTMFPSSNNMKMKWQFEASKHKTLLPTMIILSTMLLPLTPMLVVLD</sequence>
<organism>
    <name type="scientific">Hippopotamus amphibius</name>
    <name type="common">Hippopotamus</name>
    <dbReference type="NCBI Taxonomy" id="9833"/>
    <lineage>
        <taxon>Eukaryota</taxon>
        <taxon>Metazoa</taxon>
        <taxon>Chordata</taxon>
        <taxon>Craniata</taxon>
        <taxon>Vertebrata</taxon>
        <taxon>Euteleostomi</taxon>
        <taxon>Mammalia</taxon>
        <taxon>Eutheria</taxon>
        <taxon>Laurasiatheria</taxon>
        <taxon>Artiodactyla</taxon>
        <taxon>Whippomorpha</taxon>
        <taxon>Ancodonta</taxon>
        <taxon>Hippopotamidae</taxon>
        <taxon>Hippopotamus</taxon>
    </lineage>
</organism>
<name>NU2M_HIPAM</name>
<accession>Q9ZZZ0</accession>
<evidence type="ECO:0000250" key="1">
    <source>
        <dbReference type="UniProtKB" id="P03891"/>
    </source>
</evidence>
<evidence type="ECO:0000250" key="2">
    <source>
        <dbReference type="UniProtKB" id="P03892"/>
    </source>
</evidence>
<evidence type="ECO:0000255" key="3"/>
<evidence type="ECO:0000305" key="4"/>
<geneLocation type="mitochondrion"/>
<keyword id="KW-0249">Electron transport</keyword>
<keyword id="KW-0472">Membrane</keyword>
<keyword id="KW-0496">Mitochondrion</keyword>
<keyword id="KW-0999">Mitochondrion inner membrane</keyword>
<keyword id="KW-0520">NAD</keyword>
<keyword id="KW-0679">Respiratory chain</keyword>
<keyword id="KW-1278">Translocase</keyword>
<keyword id="KW-0812">Transmembrane</keyword>
<keyword id="KW-1133">Transmembrane helix</keyword>
<keyword id="KW-0813">Transport</keyword>
<keyword id="KW-0830">Ubiquinone</keyword>
<reference key="1">
    <citation type="journal article" date="1998" name="Proc. R. Soc. B">
        <title>Analyses of mitochondrial genomes strongly support a hippopotamus-whale clade.</title>
        <authorList>
            <person name="Ursing B.M."/>
            <person name="Arnason U."/>
        </authorList>
    </citation>
    <scope>NUCLEOTIDE SEQUENCE [GENOMIC DNA]</scope>
</reference>
<protein>
    <recommendedName>
        <fullName evidence="1">NADH-ubiquinone oxidoreductase chain 2</fullName>
        <ecNumber evidence="1">7.1.1.2</ecNumber>
    </recommendedName>
    <alternativeName>
        <fullName>NADH dehydrogenase subunit 2</fullName>
    </alternativeName>
</protein>
<proteinExistence type="inferred from homology"/>
<comment type="function">
    <text evidence="1">Core subunit of the mitochondrial membrane respiratory chain NADH dehydrogenase (Complex I) which catalyzes electron transfer from NADH through the respiratory chain, using ubiquinone as an electron acceptor. Essential for the catalytic activity and assembly of complex I.</text>
</comment>
<comment type="catalytic activity">
    <reaction evidence="1">
        <text>a ubiquinone + NADH + 5 H(+)(in) = a ubiquinol + NAD(+) + 4 H(+)(out)</text>
        <dbReference type="Rhea" id="RHEA:29091"/>
        <dbReference type="Rhea" id="RHEA-COMP:9565"/>
        <dbReference type="Rhea" id="RHEA-COMP:9566"/>
        <dbReference type="ChEBI" id="CHEBI:15378"/>
        <dbReference type="ChEBI" id="CHEBI:16389"/>
        <dbReference type="ChEBI" id="CHEBI:17976"/>
        <dbReference type="ChEBI" id="CHEBI:57540"/>
        <dbReference type="ChEBI" id="CHEBI:57945"/>
        <dbReference type="EC" id="7.1.1.2"/>
    </reaction>
</comment>
<comment type="subunit">
    <text evidence="1 2">Core subunit of respiratory chain NADH dehydrogenase (Complex I) which is composed of 45 different subunits. Interacts with TMEM242 (By similarity).</text>
</comment>
<comment type="subcellular location">
    <subcellularLocation>
        <location evidence="2">Mitochondrion inner membrane</location>
        <topology evidence="3">Multi-pass membrane protein</topology>
    </subcellularLocation>
</comment>
<comment type="similarity">
    <text evidence="4">Belongs to the complex I subunit 2 family.</text>
</comment>
<feature type="chain" id="PRO_0000117593" description="NADH-ubiquinone oxidoreductase chain 2">
    <location>
        <begin position="1"/>
        <end position="347"/>
    </location>
</feature>
<feature type="transmembrane region" description="Helical" evidence="3">
    <location>
        <begin position="1"/>
        <end position="21"/>
    </location>
</feature>
<feature type="transmembrane region" description="Helical" evidence="3">
    <location>
        <begin position="59"/>
        <end position="79"/>
    </location>
</feature>
<feature type="transmembrane region" description="Helical" evidence="3">
    <location>
        <begin position="93"/>
        <end position="115"/>
    </location>
</feature>
<feature type="transmembrane region" description="Helical" evidence="3">
    <location>
        <begin position="149"/>
        <end position="169"/>
    </location>
</feature>
<feature type="transmembrane region" description="Helical" evidence="3">
    <location>
        <begin position="178"/>
        <end position="198"/>
    </location>
</feature>
<feature type="transmembrane region" description="Helical" evidence="3">
    <location>
        <begin position="201"/>
        <end position="221"/>
    </location>
</feature>
<feature type="transmembrane region" description="Helical" evidence="3">
    <location>
        <begin position="239"/>
        <end position="259"/>
    </location>
</feature>
<feature type="transmembrane region" description="Helical" evidence="3">
    <location>
        <begin position="274"/>
        <end position="294"/>
    </location>
</feature>
<feature type="transmembrane region" description="Helical" evidence="3">
    <location>
        <begin position="325"/>
        <end position="345"/>
    </location>
</feature>
<dbReference type="EC" id="7.1.1.2" evidence="1"/>
<dbReference type="EMBL" id="AJ010957">
    <property type="protein sequence ID" value="CAA09429.1"/>
    <property type="molecule type" value="Genomic_DNA"/>
</dbReference>
<dbReference type="RefSeq" id="NP_008791.1">
    <property type="nucleotide sequence ID" value="NC_000889.1"/>
</dbReference>
<dbReference type="SMR" id="Q9ZZZ0"/>
<dbReference type="GeneID" id="808682"/>
<dbReference type="CTD" id="4536"/>
<dbReference type="GO" id="GO:0005743">
    <property type="term" value="C:mitochondrial inner membrane"/>
    <property type="evidence" value="ECO:0000250"/>
    <property type="project" value="UniProtKB"/>
</dbReference>
<dbReference type="GO" id="GO:0008137">
    <property type="term" value="F:NADH dehydrogenase (ubiquinone) activity"/>
    <property type="evidence" value="ECO:0000250"/>
    <property type="project" value="UniProtKB"/>
</dbReference>
<dbReference type="GO" id="GO:0006120">
    <property type="term" value="P:mitochondrial electron transport, NADH to ubiquinone"/>
    <property type="evidence" value="ECO:0000250"/>
    <property type="project" value="UniProtKB"/>
</dbReference>
<dbReference type="GO" id="GO:0032981">
    <property type="term" value="P:mitochondrial respiratory chain complex I assembly"/>
    <property type="evidence" value="ECO:0000250"/>
    <property type="project" value="UniProtKB"/>
</dbReference>
<dbReference type="InterPro" id="IPR050175">
    <property type="entry name" value="Complex_I_Subunit_2"/>
</dbReference>
<dbReference type="InterPro" id="IPR010933">
    <property type="entry name" value="NADH_DH_su2_C"/>
</dbReference>
<dbReference type="InterPro" id="IPR003917">
    <property type="entry name" value="NADH_UbQ_OxRdtase_chain2"/>
</dbReference>
<dbReference type="InterPro" id="IPR001750">
    <property type="entry name" value="ND/Mrp_TM"/>
</dbReference>
<dbReference type="PANTHER" id="PTHR46552">
    <property type="entry name" value="NADH-UBIQUINONE OXIDOREDUCTASE CHAIN 2"/>
    <property type="match status" value="1"/>
</dbReference>
<dbReference type="PANTHER" id="PTHR46552:SF1">
    <property type="entry name" value="NADH-UBIQUINONE OXIDOREDUCTASE CHAIN 2"/>
    <property type="match status" value="1"/>
</dbReference>
<dbReference type="Pfam" id="PF06444">
    <property type="entry name" value="NADH_dehy_S2_C"/>
    <property type="match status" value="1"/>
</dbReference>
<dbReference type="Pfam" id="PF00361">
    <property type="entry name" value="Proton_antipo_M"/>
    <property type="match status" value="1"/>
</dbReference>
<dbReference type="PRINTS" id="PR01436">
    <property type="entry name" value="NADHDHGNASE2"/>
</dbReference>
<gene>
    <name evidence="1" type="primary">MT-ND2</name>
    <name type="synonym">MTND2</name>
    <name type="synonym">NADH2</name>
    <name type="synonym">ND2</name>
</gene>